<accession>Q05862</accession>
<feature type="signal peptide" evidence="2">
    <location>
        <begin position="1"/>
        <end position="44"/>
    </location>
</feature>
<feature type="chain" id="PRO_0000000225" description="Diacylglycerol acyltransferase/mycolyltransferase Ag85C">
    <location>
        <begin position="45"/>
        <end position="333"/>
    </location>
</feature>
<feature type="region of interest" description="Fibronectin-binding">
    <location>
        <begin position="102"/>
        <end position="112"/>
    </location>
</feature>
<feature type="active site" description="Nucleophile" evidence="1">
    <location>
        <position position="170"/>
    </location>
</feature>
<feature type="active site" evidence="1">
    <location>
        <position position="274"/>
    </location>
</feature>
<feature type="active site" evidence="1">
    <location>
        <position position="306"/>
    </location>
</feature>
<feature type="binding site" evidence="1">
    <location>
        <begin position="86"/>
        <end position="87"/>
    </location>
    <ligand>
        <name>substrate</name>
    </ligand>
</feature>
<feature type="binding site" evidence="1">
    <location>
        <position position="170"/>
    </location>
    <ligand>
        <name>substrate</name>
    </ligand>
</feature>
<feature type="binding site" evidence="1">
    <location>
        <position position="198"/>
    </location>
    <ligand>
        <name>substrate</name>
    </ligand>
</feature>
<feature type="binding site" evidence="1">
    <location>
        <begin position="276"/>
        <end position="279"/>
    </location>
    <ligand>
        <name>substrate</name>
    </ligand>
</feature>
<feature type="binding site" evidence="1">
    <location>
        <begin position="306"/>
        <end position="308"/>
    </location>
    <ligand>
        <name>substrate</name>
    </ligand>
</feature>
<gene>
    <name type="primary">fbpC</name>
    <name type="synonym">fbpC2</name>
    <name type="ordered locus">ML2655</name>
</gene>
<keyword id="KW-0012">Acyltransferase</keyword>
<keyword id="KW-1185">Reference proteome</keyword>
<keyword id="KW-0964">Secreted</keyword>
<keyword id="KW-0732">Signal</keyword>
<keyword id="KW-0808">Transferase</keyword>
<dbReference type="EC" id="2.3.1.122"/>
<dbReference type="EC" id="2.3.1.20"/>
<dbReference type="EMBL" id="Z21951">
    <property type="protein sequence ID" value="CAA79949.1"/>
    <property type="molecule type" value="Genomic_DNA"/>
</dbReference>
<dbReference type="EMBL" id="M90649">
    <property type="protein sequence ID" value="AAA91865.1"/>
    <property type="molecule type" value="Genomic_DNA"/>
</dbReference>
<dbReference type="EMBL" id="AL583926">
    <property type="protein sequence ID" value="CAC32187.1"/>
    <property type="molecule type" value="Genomic_DNA"/>
</dbReference>
<dbReference type="PIR" id="S32114">
    <property type="entry name" value="S32114"/>
</dbReference>
<dbReference type="RefSeq" id="NP_302695.1">
    <property type="nucleotide sequence ID" value="NC_002677.1"/>
</dbReference>
<dbReference type="RefSeq" id="WP_010909014.1">
    <property type="nucleotide sequence ID" value="NC_002677.1"/>
</dbReference>
<dbReference type="SMR" id="Q05862"/>
<dbReference type="STRING" id="272631.gene:17576521"/>
<dbReference type="ESTHER" id="mycle-a85c">
    <property type="family name" value="A85-Mycolyl-transferase"/>
</dbReference>
<dbReference type="KEGG" id="mle:ML2655"/>
<dbReference type="PATRIC" id="fig|272631.5.peg.5102"/>
<dbReference type="Leproma" id="ML2655"/>
<dbReference type="eggNOG" id="COG0627">
    <property type="taxonomic scope" value="Bacteria"/>
</dbReference>
<dbReference type="HOGENOM" id="CLU_026624_3_1_11"/>
<dbReference type="OrthoDB" id="4366784at2"/>
<dbReference type="Proteomes" id="UP000000806">
    <property type="component" value="Chromosome"/>
</dbReference>
<dbReference type="GO" id="GO:0005576">
    <property type="term" value="C:extracellular region"/>
    <property type="evidence" value="ECO:0007669"/>
    <property type="project" value="UniProtKB-SubCell"/>
</dbReference>
<dbReference type="GO" id="GO:0004144">
    <property type="term" value="F:diacylglycerol O-acyltransferase activity"/>
    <property type="evidence" value="ECO:0007669"/>
    <property type="project" value="UniProtKB-EC"/>
</dbReference>
<dbReference type="GO" id="GO:0050348">
    <property type="term" value="F:trehalose O-mycolyltransferase activity"/>
    <property type="evidence" value="ECO:0007669"/>
    <property type="project" value="UniProtKB-EC"/>
</dbReference>
<dbReference type="FunFam" id="3.40.50.1820:FF:000086">
    <property type="entry name" value="Diacylglycerol acyltransferase/mycolyltransferase Ag85C"/>
    <property type="match status" value="1"/>
</dbReference>
<dbReference type="Gene3D" id="3.40.50.1820">
    <property type="entry name" value="alpha/beta hydrolase"/>
    <property type="match status" value="1"/>
</dbReference>
<dbReference type="InterPro" id="IPR029058">
    <property type="entry name" value="AB_hydrolase_fold"/>
</dbReference>
<dbReference type="InterPro" id="IPR000801">
    <property type="entry name" value="Esterase-like"/>
</dbReference>
<dbReference type="InterPro" id="IPR050583">
    <property type="entry name" value="Mycobacterial_A85_antigen"/>
</dbReference>
<dbReference type="PANTHER" id="PTHR48098:SF1">
    <property type="entry name" value="DIACYLGLYCEROL ACYLTRANSFERASE_MYCOLYLTRANSFERASE AG85A"/>
    <property type="match status" value="1"/>
</dbReference>
<dbReference type="PANTHER" id="PTHR48098">
    <property type="entry name" value="ENTEROCHELIN ESTERASE-RELATED"/>
    <property type="match status" value="1"/>
</dbReference>
<dbReference type="Pfam" id="PF00756">
    <property type="entry name" value="Esterase"/>
    <property type="match status" value="1"/>
</dbReference>
<dbReference type="SUPFAM" id="SSF53474">
    <property type="entry name" value="alpha/beta-Hydrolases"/>
    <property type="match status" value="1"/>
</dbReference>
<sequence>MKFLQQMRKLFGLAAKFPARLTIAVIGTALLAGLVGVVGDTAIAVAFSKPGLPVEYLQVPSPSMGHDIKIQFQGGGQHAVYLLDGLRAQEDYNGWDINTPAFEEYYHSGLSVIMPVGGQSSFYSNWYQPSQGNGQHYTYKWETFLTQEMPSWLQANKNVLPTGNAAVGLSMSGSSALILASYYPQQFPYAASLSGFLNPSEGWWPTMIGLAMNDSGGYNANSMWGPSTDPAWKRNDPMVQIPRLVANNTRIWVYCGNGAPNELGGDNIPAKFLESLTLSTNEIFQNTYAASGGRNGVFNFPPNGTHSWPYWNQQLVAMKPDIQQILNGSNNNA</sequence>
<name>A85C_MYCLE</name>
<protein>
    <recommendedName>
        <fullName>Diacylglycerol acyltransferase/mycolyltransferase Ag85C</fullName>
        <shortName>DGAT</shortName>
        <ecNumber>2.3.1.122</ecNumber>
        <ecNumber>2.3.1.20</ecNumber>
    </recommendedName>
    <alternativeName>
        <fullName>Acyl-CoA:diacylglycerol acyltransferase</fullName>
    </alternativeName>
    <alternativeName>
        <fullName>Antigen 85 complex C</fullName>
        <shortName>85C</shortName>
        <shortName>Ag85C</shortName>
    </alternativeName>
    <alternativeName>
        <fullName>Fibronectin-binding protein C</fullName>
        <shortName>Fbps C</shortName>
    </alternativeName>
</protein>
<proteinExistence type="inferred from homology"/>
<reference key="1">
    <citation type="journal article" date="1993" name="Infect. Immun.">
        <title>The Mycobacterium leprae antigen 85 complex gene family: identification of the genes for the 85A, 85C, and related MPT51 proteins.</title>
        <authorList>
            <person name="Rinke de Wit T.F."/>
            <person name="Bekelie S."/>
            <person name="Osland A."/>
            <person name="Wieles B."/>
            <person name="Janson A.A.M."/>
            <person name="Thole J.E.R."/>
        </authorList>
    </citation>
    <scope>NUCLEOTIDE SEQUENCE [GENOMIC DNA]</scope>
</reference>
<reference key="2">
    <citation type="submission" date="1996-03" db="EMBL/GenBank/DDBJ databases">
        <authorList>
            <person name="de Mendonca-Lima L."/>
        </authorList>
    </citation>
    <scope>NUCLEOTIDE SEQUENCE [GENOMIC DNA]</scope>
</reference>
<reference key="3">
    <citation type="journal article" date="2001" name="Nature">
        <title>Massive gene decay in the leprosy bacillus.</title>
        <authorList>
            <person name="Cole S.T."/>
            <person name="Eiglmeier K."/>
            <person name="Parkhill J."/>
            <person name="James K.D."/>
            <person name="Thomson N.R."/>
            <person name="Wheeler P.R."/>
            <person name="Honore N."/>
            <person name="Garnier T."/>
            <person name="Churcher C.M."/>
            <person name="Harris D.E."/>
            <person name="Mungall K.L."/>
            <person name="Basham D."/>
            <person name="Brown D."/>
            <person name="Chillingworth T."/>
            <person name="Connor R."/>
            <person name="Davies R.M."/>
            <person name="Devlin K."/>
            <person name="Duthoy S."/>
            <person name="Feltwell T."/>
            <person name="Fraser A."/>
            <person name="Hamlin N."/>
            <person name="Holroyd S."/>
            <person name="Hornsby T."/>
            <person name="Jagels K."/>
            <person name="Lacroix C."/>
            <person name="Maclean J."/>
            <person name="Moule S."/>
            <person name="Murphy L.D."/>
            <person name="Oliver K."/>
            <person name="Quail M.A."/>
            <person name="Rajandream M.A."/>
            <person name="Rutherford K.M."/>
            <person name="Rutter S."/>
            <person name="Seeger K."/>
            <person name="Simon S."/>
            <person name="Simmonds M."/>
            <person name="Skelton J."/>
            <person name="Squares R."/>
            <person name="Squares S."/>
            <person name="Stevens K."/>
            <person name="Taylor K."/>
            <person name="Whitehead S."/>
            <person name="Woodward J.R."/>
            <person name="Barrell B.G."/>
        </authorList>
    </citation>
    <scope>NUCLEOTIDE SEQUENCE [LARGE SCALE GENOMIC DNA]</scope>
    <source>
        <strain>TN</strain>
    </source>
</reference>
<comment type="function">
    <text evidence="1">The antigen 85 proteins (FbpA, FbpB, FbpC) are responsible for the high affinity of mycobacteria to fibronectin, a large adhesive glycoprotein, which facilitates the attachment of M.tuberculosis to murine alveolar macrophages (AMs). They also help to maintain the integrity of the cell wall by catalyzing the transfer of mycolic acids to cell wall arabinogalactan and through the synthesis of alpha,alpha-trehalose dimycolate (TDM, cord factor). They catalyze the transfer of a mycoloyl residue from one molecule of alpha,alpha-trehalose monomycolate (TMM) to another TMM, leading to the formation of TDM (By similarity).</text>
</comment>
<comment type="catalytic activity">
    <reaction>
        <text>an acyl-CoA + a 1,2-diacyl-sn-glycerol = a triacyl-sn-glycerol + CoA</text>
        <dbReference type="Rhea" id="RHEA:10868"/>
        <dbReference type="ChEBI" id="CHEBI:17815"/>
        <dbReference type="ChEBI" id="CHEBI:57287"/>
        <dbReference type="ChEBI" id="CHEBI:58342"/>
        <dbReference type="ChEBI" id="CHEBI:64615"/>
        <dbReference type="EC" id="2.3.1.20"/>
    </reaction>
</comment>
<comment type="catalytic activity">
    <reaction>
        <text>2 alpha,alpha'-trehalose 6-mycolate = alpha,alpha'-trehalose 6,6'-bismycolate + alpha,alpha-trehalose</text>
        <dbReference type="Rhea" id="RHEA:23472"/>
        <dbReference type="ChEBI" id="CHEBI:16551"/>
        <dbReference type="ChEBI" id="CHEBI:18195"/>
        <dbReference type="ChEBI" id="CHEBI:18234"/>
        <dbReference type="EC" id="2.3.1.122"/>
    </reaction>
</comment>
<comment type="subunit">
    <text evidence="1">Homodimer.</text>
</comment>
<comment type="subcellular location">
    <subcellularLocation>
        <location evidence="1">Secreted</location>
    </subcellularLocation>
</comment>
<comment type="similarity">
    <text evidence="3">Belongs to the mycobacterial A85 antigen family.</text>
</comment>
<evidence type="ECO:0000250" key="1"/>
<evidence type="ECO:0000255" key="2"/>
<evidence type="ECO:0000305" key="3"/>
<organism>
    <name type="scientific">Mycobacterium leprae (strain TN)</name>
    <dbReference type="NCBI Taxonomy" id="272631"/>
    <lineage>
        <taxon>Bacteria</taxon>
        <taxon>Bacillati</taxon>
        <taxon>Actinomycetota</taxon>
        <taxon>Actinomycetes</taxon>
        <taxon>Mycobacteriales</taxon>
        <taxon>Mycobacteriaceae</taxon>
        <taxon>Mycobacterium</taxon>
    </lineage>
</organism>